<name>RSXB_SALPB</name>
<gene>
    <name evidence="1" type="primary">rsxB</name>
    <name type="ordered locus">SPAB_01862</name>
</gene>
<keyword id="KW-0004">4Fe-4S</keyword>
<keyword id="KW-0997">Cell inner membrane</keyword>
<keyword id="KW-1003">Cell membrane</keyword>
<keyword id="KW-0249">Electron transport</keyword>
<keyword id="KW-0408">Iron</keyword>
<keyword id="KW-0411">Iron-sulfur</keyword>
<keyword id="KW-0472">Membrane</keyword>
<keyword id="KW-0479">Metal-binding</keyword>
<keyword id="KW-0677">Repeat</keyword>
<keyword id="KW-1278">Translocase</keyword>
<keyword id="KW-0813">Transport</keyword>
<protein>
    <recommendedName>
        <fullName evidence="1">Ion-translocating oxidoreductase complex subunit B</fullName>
        <ecNumber evidence="1">7.-.-.-</ecNumber>
    </recommendedName>
    <alternativeName>
        <fullName evidence="1">Rsx electron transport complex subunit B</fullName>
    </alternativeName>
</protein>
<proteinExistence type="inferred from homology"/>
<organism>
    <name type="scientific">Salmonella paratyphi B (strain ATCC BAA-1250 / SPB7)</name>
    <dbReference type="NCBI Taxonomy" id="1016998"/>
    <lineage>
        <taxon>Bacteria</taxon>
        <taxon>Pseudomonadati</taxon>
        <taxon>Pseudomonadota</taxon>
        <taxon>Gammaproteobacteria</taxon>
        <taxon>Enterobacterales</taxon>
        <taxon>Enterobacteriaceae</taxon>
        <taxon>Salmonella</taxon>
    </lineage>
</organism>
<reference key="1">
    <citation type="submission" date="2007-11" db="EMBL/GenBank/DDBJ databases">
        <authorList>
            <consortium name="The Salmonella enterica serovar Paratyphi B Genome Sequencing Project"/>
            <person name="McClelland M."/>
            <person name="Sanderson E.K."/>
            <person name="Porwollik S."/>
            <person name="Spieth J."/>
            <person name="Clifton W.S."/>
            <person name="Fulton R."/>
            <person name="Cordes M."/>
            <person name="Wollam A."/>
            <person name="Shah N."/>
            <person name="Pepin K."/>
            <person name="Bhonagiri V."/>
            <person name="Nash W."/>
            <person name="Johnson M."/>
            <person name="Thiruvilangam P."/>
            <person name="Wilson R."/>
        </authorList>
    </citation>
    <scope>NUCLEOTIDE SEQUENCE [LARGE SCALE GENOMIC DNA]</scope>
    <source>
        <strain>ATCC BAA-1250 / SPB7</strain>
    </source>
</reference>
<feature type="chain" id="PRO_1000081165" description="Ion-translocating oxidoreductase complex subunit B">
    <location>
        <begin position="1"/>
        <end position="192"/>
    </location>
</feature>
<feature type="domain" description="4Fe-4S" evidence="1">
    <location>
        <begin position="32"/>
        <end position="91"/>
    </location>
</feature>
<feature type="domain" description="4Fe-4S ferredoxin-type 1" evidence="1">
    <location>
        <begin position="108"/>
        <end position="137"/>
    </location>
</feature>
<feature type="domain" description="4Fe-4S ferredoxin-type 2" evidence="1">
    <location>
        <begin position="138"/>
        <end position="167"/>
    </location>
</feature>
<feature type="region of interest" description="Hydrophobic" evidence="1">
    <location>
        <begin position="1"/>
        <end position="26"/>
    </location>
</feature>
<feature type="binding site" evidence="1">
    <location>
        <position position="49"/>
    </location>
    <ligand>
        <name>[4Fe-4S] cluster</name>
        <dbReference type="ChEBI" id="CHEBI:49883"/>
        <label>1</label>
    </ligand>
</feature>
<feature type="binding site" evidence="1">
    <location>
        <position position="52"/>
    </location>
    <ligand>
        <name>[4Fe-4S] cluster</name>
        <dbReference type="ChEBI" id="CHEBI:49883"/>
        <label>1</label>
    </ligand>
</feature>
<feature type="binding site" evidence="1">
    <location>
        <position position="57"/>
    </location>
    <ligand>
        <name>[4Fe-4S] cluster</name>
        <dbReference type="ChEBI" id="CHEBI:49883"/>
        <label>1</label>
    </ligand>
</feature>
<feature type="binding site" evidence="1">
    <location>
        <position position="74"/>
    </location>
    <ligand>
        <name>[4Fe-4S] cluster</name>
        <dbReference type="ChEBI" id="CHEBI:49883"/>
        <label>1</label>
    </ligand>
</feature>
<feature type="binding site" evidence="1">
    <location>
        <position position="117"/>
    </location>
    <ligand>
        <name>[4Fe-4S] cluster</name>
        <dbReference type="ChEBI" id="CHEBI:49883"/>
        <label>2</label>
    </ligand>
</feature>
<feature type="binding site" evidence="1">
    <location>
        <position position="120"/>
    </location>
    <ligand>
        <name>[4Fe-4S] cluster</name>
        <dbReference type="ChEBI" id="CHEBI:49883"/>
        <label>2</label>
    </ligand>
</feature>
<feature type="binding site" evidence="1">
    <location>
        <position position="123"/>
    </location>
    <ligand>
        <name>[4Fe-4S] cluster</name>
        <dbReference type="ChEBI" id="CHEBI:49883"/>
        <label>2</label>
    </ligand>
</feature>
<feature type="binding site" evidence="1">
    <location>
        <position position="127"/>
    </location>
    <ligand>
        <name>[4Fe-4S] cluster</name>
        <dbReference type="ChEBI" id="CHEBI:49883"/>
        <label>3</label>
    </ligand>
</feature>
<feature type="binding site" evidence="1">
    <location>
        <position position="147"/>
    </location>
    <ligand>
        <name>[4Fe-4S] cluster</name>
        <dbReference type="ChEBI" id="CHEBI:49883"/>
        <label>3</label>
    </ligand>
</feature>
<feature type="binding site" evidence="1">
    <location>
        <position position="150"/>
    </location>
    <ligand>
        <name>[4Fe-4S] cluster</name>
        <dbReference type="ChEBI" id="CHEBI:49883"/>
        <label>3</label>
    </ligand>
</feature>
<feature type="binding site" evidence="1">
    <location>
        <position position="153"/>
    </location>
    <ligand>
        <name>[4Fe-4S] cluster</name>
        <dbReference type="ChEBI" id="CHEBI:49883"/>
        <label>3</label>
    </ligand>
</feature>
<feature type="binding site" evidence="1">
    <location>
        <position position="157"/>
    </location>
    <ligand>
        <name>[4Fe-4S] cluster</name>
        <dbReference type="ChEBI" id="CHEBI:49883"/>
        <label>2</label>
    </ligand>
</feature>
<accession>A9N024</accession>
<dbReference type="EC" id="7.-.-.-" evidence="1"/>
<dbReference type="EMBL" id="CP000886">
    <property type="protein sequence ID" value="ABX67255.1"/>
    <property type="molecule type" value="Genomic_DNA"/>
</dbReference>
<dbReference type="RefSeq" id="WP_001092597.1">
    <property type="nucleotide sequence ID" value="NC_010102.1"/>
</dbReference>
<dbReference type="SMR" id="A9N024"/>
<dbReference type="KEGG" id="spq:SPAB_01862"/>
<dbReference type="PATRIC" id="fig|1016998.12.peg.1754"/>
<dbReference type="HOGENOM" id="CLU_063448_2_0_6"/>
<dbReference type="BioCyc" id="SENT1016998:SPAB_RS07555-MONOMER"/>
<dbReference type="Proteomes" id="UP000008556">
    <property type="component" value="Chromosome"/>
</dbReference>
<dbReference type="GO" id="GO:0005886">
    <property type="term" value="C:plasma membrane"/>
    <property type="evidence" value="ECO:0007669"/>
    <property type="project" value="UniProtKB-SubCell"/>
</dbReference>
<dbReference type="GO" id="GO:0051539">
    <property type="term" value="F:4 iron, 4 sulfur cluster binding"/>
    <property type="evidence" value="ECO:0007669"/>
    <property type="project" value="UniProtKB-UniRule"/>
</dbReference>
<dbReference type="GO" id="GO:0009055">
    <property type="term" value="F:electron transfer activity"/>
    <property type="evidence" value="ECO:0007669"/>
    <property type="project" value="InterPro"/>
</dbReference>
<dbReference type="GO" id="GO:0046872">
    <property type="term" value="F:metal ion binding"/>
    <property type="evidence" value="ECO:0007669"/>
    <property type="project" value="UniProtKB-KW"/>
</dbReference>
<dbReference type="GO" id="GO:0022900">
    <property type="term" value="P:electron transport chain"/>
    <property type="evidence" value="ECO:0007669"/>
    <property type="project" value="UniProtKB-UniRule"/>
</dbReference>
<dbReference type="FunFam" id="1.10.15.40:FF:000001">
    <property type="entry name" value="Ion-translocating oxidoreductase complex subunit B"/>
    <property type="match status" value="1"/>
</dbReference>
<dbReference type="Gene3D" id="3.30.70.20">
    <property type="match status" value="1"/>
</dbReference>
<dbReference type="Gene3D" id="1.10.15.40">
    <property type="entry name" value="Electron transport complex subunit B, putative Fe-S cluster"/>
    <property type="match status" value="1"/>
</dbReference>
<dbReference type="HAMAP" id="MF_00463">
    <property type="entry name" value="RsxB_RnfB"/>
    <property type="match status" value="1"/>
</dbReference>
<dbReference type="InterPro" id="IPR007202">
    <property type="entry name" value="4Fe-4S_dom"/>
</dbReference>
<dbReference type="InterPro" id="IPR017896">
    <property type="entry name" value="4Fe4S_Fe-S-bd"/>
</dbReference>
<dbReference type="InterPro" id="IPR017900">
    <property type="entry name" value="4Fe4S_Fe_S_CS"/>
</dbReference>
<dbReference type="InterPro" id="IPR050395">
    <property type="entry name" value="4Fe4S_Ferredoxin_RnfB"/>
</dbReference>
<dbReference type="InterPro" id="IPR010207">
    <property type="entry name" value="Elect_transpt_cplx_RnfB/RsxB"/>
</dbReference>
<dbReference type="InterPro" id="IPR016463">
    <property type="entry name" value="RnfB/RsxB_Proteobac"/>
</dbReference>
<dbReference type="NCBIfam" id="NF003475">
    <property type="entry name" value="PRK05113.1"/>
    <property type="match status" value="1"/>
</dbReference>
<dbReference type="NCBIfam" id="TIGR01944">
    <property type="entry name" value="rnfB"/>
    <property type="match status" value="1"/>
</dbReference>
<dbReference type="PANTHER" id="PTHR43560">
    <property type="entry name" value="ION-TRANSLOCATING OXIDOREDUCTASE COMPLEX SUBUNIT B"/>
    <property type="match status" value="1"/>
</dbReference>
<dbReference type="PANTHER" id="PTHR43560:SF1">
    <property type="entry name" value="ION-TRANSLOCATING OXIDOREDUCTASE COMPLEX SUBUNIT B"/>
    <property type="match status" value="1"/>
</dbReference>
<dbReference type="Pfam" id="PF14697">
    <property type="entry name" value="Fer4_21"/>
    <property type="match status" value="1"/>
</dbReference>
<dbReference type="Pfam" id="PF04060">
    <property type="entry name" value="FeS"/>
    <property type="match status" value="1"/>
</dbReference>
<dbReference type="PIRSF" id="PIRSF005784">
    <property type="entry name" value="Elect_transpt_RnfB"/>
    <property type="match status" value="1"/>
</dbReference>
<dbReference type="SUPFAM" id="SSF54862">
    <property type="entry name" value="4Fe-4S ferredoxins"/>
    <property type="match status" value="1"/>
</dbReference>
<dbReference type="PROSITE" id="PS51656">
    <property type="entry name" value="4FE4S"/>
    <property type="match status" value="1"/>
</dbReference>
<dbReference type="PROSITE" id="PS00198">
    <property type="entry name" value="4FE4S_FER_1"/>
    <property type="match status" value="2"/>
</dbReference>
<dbReference type="PROSITE" id="PS51379">
    <property type="entry name" value="4FE4S_FER_2"/>
    <property type="match status" value="2"/>
</dbReference>
<sequence>MNTIWIAVGALTLLGLVFGAILGYASRRFAVEDDPVVEKIDAILPQSQCGQCGYPGCRPYAEAVGLQGEKINRCAPGGEAVMLKIAELLNVEPQPCDGEEQQAAPVRMLAVIDENNCIGCTKCIQACPVDAIVGATRAMHTVMSDLCTGCNLCVDPCPTHCIELRPVNETPDSWKWDLNTIPVRIIPVEQHA</sequence>
<evidence type="ECO:0000255" key="1">
    <source>
        <dbReference type="HAMAP-Rule" id="MF_00463"/>
    </source>
</evidence>
<comment type="function">
    <text evidence="1">Part of a membrane-bound complex that couples electron transfer with translocation of ions across the membrane. Required to maintain the reduced state of SoxR.</text>
</comment>
<comment type="cofactor">
    <cofactor evidence="1">
        <name>[4Fe-4S] cluster</name>
        <dbReference type="ChEBI" id="CHEBI:49883"/>
    </cofactor>
    <text evidence="1">Binds 3 [4Fe-4S] clusters.</text>
</comment>
<comment type="subunit">
    <text evidence="1">The complex is composed of six subunits: RsxA, RsxB, RsxC, RsxD, RsxE and RsxG.</text>
</comment>
<comment type="subcellular location">
    <subcellularLocation>
        <location evidence="1">Cell inner membrane</location>
    </subcellularLocation>
</comment>
<comment type="similarity">
    <text evidence="1">Belongs to the 4Fe4S bacterial-type ferredoxin family. RnfB subfamily.</text>
</comment>